<organism>
    <name type="scientific">Salmonella arizonae (strain ATCC BAA-731 / CDC346-86 / RSK2980)</name>
    <dbReference type="NCBI Taxonomy" id="41514"/>
    <lineage>
        <taxon>Bacteria</taxon>
        <taxon>Pseudomonadati</taxon>
        <taxon>Pseudomonadota</taxon>
        <taxon>Gammaproteobacteria</taxon>
        <taxon>Enterobacterales</taxon>
        <taxon>Enterobacteriaceae</taxon>
        <taxon>Salmonella</taxon>
    </lineage>
</organism>
<sequence>MSHRDTLFSAPIARLGDWTFDERVAEVFPDMIQRSVPGYSNIISMIGMLAERFVQPDTQVYDLGCSLGAATLSVRRNIRHEHCRIIAVDNSPAMIERCRRHIDAYKAPTPVEVVEGDIRDITIENASMVVLNFTLQFLEPAERQALLDKIYLGLNPGGALVLSEKFSFEDAKVGELLFNMHHDFKRANGYSELEISQKRSMLENVMLTDSVETHKARLRKAGFEHSELWFQCFNFGSLVALKAGVAA</sequence>
<reference key="1">
    <citation type="submission" date="2007-11" db="EMBL/GenBank/DDBJ databases">
        <authorList>
            <consortium name="The Salmonella enterica serovar Arizonae Genome Sequencing Project"/>
            <person name="McClelland M."/>
            <person name="Sanderson E.K."/>
            <person name="Porwollik S."/>
            <person name="Spieth J."/>
            <person name="Clifton W.S."/>
            <person name="Fulton R."/>
            <person name="Chunyan W."/>
            <person name="Wollam A."/>
            <person name="Shah N."/>
            <person name="Pepin K."/>
            <person name="Bhonagiri V."/>
            <person name="Nash W."/>
            <person name="Johnson M."/>
            <person name="Thiruvilangam P."/>
            <person name="Wilson R."/>
        </authorList>
    </citation>
    <scope>NUCLEOTIDE SEQUENCE [LARGE SCALE GENOMIC DNA]</scope>
    <source>
        <strain>ATCC BAA-731 / CDC346-86 / RSK2980</strain>
    </source>
</reference>
<proteinExistence type="inferred from homology"/>
<accession>A9MNC8</accession>
<keyword id="KW-1185">Reference proteome</keyword>
<keyword id="KW-0949">S-adenosyl-L-methionine</keyword>
<keyword id="KW-0808">Transferase</keyword>
<protein>
    <recommendedName>
        <fullName evidence="1">Carboxy-S-adenosyl-L-methionine synthase</fullName>
        <shortName evidence="1">Cx-SAM synthase</shortName>
        <ecNumber evidence="1">2.1.3.-</ecNumber>
    </recommendedName>
</protein>
<feature type="chain" id="PRO_1000087961" description="Carboxy-S-adenosyl-L-methionine synthase">
    <location>
        <begin position="1"/>
        <end position="247"/>
    </location>
</feature>
<feature type="binding site" evidence="1">
    <location>
        <position position="39"/>
    </location>
    <ligand>
        <name>S-adenosyl-L-methionine</name>
        <dbReference type="ChEBI" id="CHEBI:59789"/>
    </ligand>
</feature>
<feature type="binding site" evidence="1">
    <location>
        <begin position="64"/>
        <end position="66"/>
    </location>
    <ligand>
        <name>S-adenosyl-L-methionine</name>
        <dbReference type="ChEBI" id="CHEBI:59789"/>
    </ligand>
</feature>
<feature type="binding site" evidence="1">
    <location>
        <begin position="89"/>
        <end position="90"/>
    </location>
    <ligand>
        <name>S-adenosyl-L-methionine</name>
        <dbReference type="ChEBI" id="CHEBI:59789"/>
    </ligand>
</feature>
<feature type="binding site" evidence="1">
    <location>
        <begin position="117"/>
        <end position="118"/>
    </location>
    <ligand>
        <name>S-adenosyl-L-methionine</name>
        <dbReference type="ChEBI" id="CHEBI:59789"/>
    </ligand>
</feature>
<feature type="binding site" evidence="1">
    <location>
        <position position="132"/>
    </location>
    <ligand>
        <name>S-adenosyl-L-methionine</name>
        <dbReference type="ChEBI" id="CHEBI:59789"/>
    </ligand>
</feature>
<feature type="binding site" evidence="1">
    <location>
        <position position="199"/>
    </location>
    <ligand>
        <name>S-adenosyl-L-methionine</name>
        <dbReference type="ChEBI" id="CHEBI:59789"/>
    </ligand>
</feature>
<name>CMOA_SALAR</name>
<evidence type="ECO:0000255" key="1">
    <source>
        <dbReference type="HAMAP-Rule" id="MF_01589"/>
    </source>
</evidence>
<dbReference type="EC" id="2.1.3.-" evidence="1"/>
<dbReference type="EMBL" id="CP000880">
    <property type="protein sequence ID" value="ABX20951.1"/>
    <property type="molecule type" value="Genomic_DNA"/>
</dbReference>
<dbReference type="SMR" id="A9MNC8"/>
<dbReference type="STRING" id="41514.SARI_01043"/>
<dbReference type="KEGG" id="ses:SARI_01043"/>
<dbReference type="HOGENOM" id="CLU_078475_0_0_6"/>
<dbReference type="Proteomes" id="UP000002084">
    <property type="component" value="Chromosome"/>
</dbReference>
<dbReference type="GO" id="GO:0016743">
    <property type="term" value="F:carboxyl- or carbamoyltransferase activity"/>
    <property type="evidence" value="ECO:0007669"/>
    <property type="project" value="UniProtKB-UniRule"/>
</dbReference>
<dbReference type="GO" id="GO:1904047">
    <property type="term" value="F:S-adenosyl-L-methionine binding"/>
    <property type="evidence" value="ECO:0007669"/>
    <property type="project" value="UniProtKB-UniRule"/>
</dbReference>
<dbReference type="GO" id="GO:0002098">
    <property type="term" value="P:tRNA wobble uridine modification"/>
    <property type="evidence" value="ECO:0007669"/>
    <property type="project" value="InterPro"/>
</dbReference>
<dbReference type="CDD" id="cd02440">
    <property type="entry name" value="AdoMet_MTases"/>
    <property type="match status" value="1"/>
</dbReference>
<dbReference type="FunFam" id="3.40.50.150:FF:000030">
    <property type="entry name" value="Carboxy-S-adenosyl-L-methionine synthase"/>
    <property type="match status" value="1"/>
</dbReference>
<dbReference type="Gene3D" id="3.40.50.150">
    <property type="entry name" value="Vaccinia Virus protein VP39"/>
    <property type="match status" value="1"/>
</dbReference>
<dbReference type="HAMAP" id="MF_01589">
    <property type="entry name" value="Cx_SAM_synthase"/>
    <property type="match status" value="1"/>
</dbReference>
<dbReference type="InterPro" id="IPR005271">
    <property type="entry name" value="CmoA"/>
</dbReference>
<dbReference type="InterPro" id="IPR041698">
    <property type="entry name" value="Methyltransf_25"/>
</dbReference>
<dbReference type="InterPro" id="IPR029063">
    <property type="entry name" value="SAM-dependent_MTases_sf"/>
</dbReference>
<dbReference type="NCBIfam" id="TIGR00740">
    <property type="entry name" value="carboxy-S-adenosyl-L-methionine synthase CmoA"/>
    <property type="match status" value="1"/>
</dbReference>
<dbReference type="NCBIfam" id="NF011995">
    <property type="entry name" value="PRK15451.1"/>
    <property type="match status" value="1"/>
</dbReference>
<dbReference type="PANTHER" id="PTHR43861:SF2">
    <property type="entry name" value="CARBOXY-S-ADENOSYL-L-METHIONINE SYNTHASE"/>
    <property type="match status" value="1"/>
</dbReference>
<dbReference type="PANTHER" id="PTHR43861">
    <property type="entry name" value="TRANS-ACONITATE 2-METHYLTRANSFERASE-RELATED"/>
    <property type="match status" value="1"/>
</dbReference>
<dbReference type="Pfam" id="PF13649">
    <property type="entry name" value="Methyltransf_25"/>
    <property type="match status" value="1"/>
</dbReference>
<dbReference type="PIRSF" id="PIRSF006325">
    <property type="entry name" value="MeTrfase_bac"/>
    <property type="match status" value="1"/>
</dbReference>
<dbReference type="SUPFAM" id="SSF53335">
    <property type="entry name" value="S-adenosyl-L-methionine-dependent methyltransferases"/>
    <property type="match status" value="1"/>
</dbReference>
<comment type="function">
    <text evidence="1">Catalyzes the conversion of S-adenosyl-L-methionine (SAM) to carboxy-S-adenosyl-L-methionine (Cx-SAM).</text>
</comment>
<comment type="catalytic activity">
    <reaction evidence="1">
        <text>prephenate + S-adenosyl-L-methionine = carboxy-S-adenosyl-L-methionine + 3-phenylpyruvate + H2O</text>
        <dbReference type="Rhea" id="RHEA:51692"/>
        <dbReference type="ChEBI" id="CHEBI:15377"/>
        <dbReference type="ChEBI" id="CHEBI:18005"/>
        <dbReference type="ChEBI" id="CHEBI:29934"/>
        <dbReference type="ChEBI" id="CHEBI:59789"/>
        <dbReference type="ChEBI" id="CHEBI:134278"/>
    </reaction>
</comment>
<comment type="subunit">
    <text evidence="1">Homodimer.</text>
</comment>
<comment type="similarity">
    <text evidence="1">Belongs to the class I-like SAM-binding methyltransferase superfamily. Cx-SAM synthase family.</text>
</comment>
<gene>
    <name evidence="1" type="primary">cmoA</name>
    <name type="ordered locus">SARI_01043</name>
</gene>